<accession>Q86UQ4</accession>
<accession>A0A0A0MT16</accession>
<accession>K9LC76</accession>
<accession>K9LC79</accession>
<accession>K9LCX7</accession>
<accession>K9LDK8</accession>
<accession>K9LDY4</accession>
<accession>Q6ZTT7</accession>
<accession>Q86WI2</accession>
<accession>Q8N248</accession>
<gene>
    <name evidence="12" type="primary">ABCA13</name>
</gene>
<evidence type="ECO:0000250" key="1">
    <source>
        <dbReference type="UniProtKB" id="Q5SSE9"/>
    </source>
</evidence>
<evidence type="ECO:0000255" key="2"/>
<evidence type="ECO:0000255" key="3">
    <source>
        <dbReference type="PROSITE-ProRule" id="PRU00434"/>
    </source>
</evidence>
<evidence type="ECO:0000269" key="4">
    <source>
    </source>
</evidence>
<evidence type="ECO:0000269" key="5">
    <source>
    </source>
</evidence>
<evidence type="ECO:0000269" key="6">
    <source>
    </source>
</evidence>
<evidence type="ECO:0000269" key="7">
    <source ref="5"/>
</evidence>
<evidence type="ECO:0000303" key="8">
    <source>
    </source>
</evidence>
<evidence type="ECO:0000303" key="9">
    <source>
    </source>
</evidence>
<evidence type="ECO:0000303" key="10">
    <source ref="5"/>
</evidence>
<evidence type="ECO:0000305" key="11"/>
<evidence type="ECO:0000312" key="12">
    <source>
        <dbReference type="HGNC" id="HGNC:14638"/>
    </source>
</evidence>
<dbReference type="EC" id="7.6.2.-" evidence="1"/>
<dbReference type="EMBL" id="AY204751">
    <property type="protein sequence ID" value="AAP13576.1"/>
    <property type="molecule type" value="mRNA"/>
</dbReference>
<dbReference type="EMBL" id="JF913488">
    <property type="protein sequence ID" value="AFH89038.1"/>
    <property type="molecule type" value="mRNA"/>
</dbReference>
<dbReference type="EMBL" id="JF913489">
    <property type="protein sequence ID" value="AFH89039.1"/>
    <property type="molecule type" value="mRNA"/>
</dbReference>
<dbReference type="EMBL" id="JF913490">
    <property type="protein sequence ID" value="AFH89040.1"/>
    <property type="molecule type" value="mRNA"/>
</dbReference>
<dbReference type="EMBL" id="JF913491">
    <property type="protein sequence ID" value="AFH89041.1"/>
    <property type="molecule type" value="mRNA"/>
</dbReference>
<dbReference type="EMBL" id="JF913492">
    <property type="protein sequence ID" value="AFH89042.1"/>
    <property type="molecule type" value="mRNA"/>
</dbReference>
<dbReference type="EMBL" id="AK091270">
    <property type="protein sequence ID" value="BAC03623.1"/>
    <property type="status" value="ALT_INIT"/>
    <property type="molecule type" value="mRNA"/>
</dbReference>
<dbReference type="EMBL" id="AK126220">
    <property type="protein sequence ID" value="BAC86492.1"/>
    <property type="status" value="ALT_SEQ"/>
    <property type="molecule type" value="mRNA"/>
</dbReference>
<dbReference type="EMBL" id="AC073424">
    <property type="status" value="NOT_ANNOTATED_CDS"/>
    <property type="molecule type" value="Genomic_DNA"/>
</dbReference>
<dbReference type="EMBL" id="AC073927">
    <property type="status" value="NOT_ANNOTATED_CDS"/>
    <property type="molecule type" value="Genomic_DNA"/>
</dbReference>
<dbReference type="EMBL" id="AC091770">
    <property type="status" value="NOT_ANNOTATED_CDS"/>
    <property type="molecule type" value="Genomic_DNA"/>
</dbReference>
<dbReference type="EMBL" id="AC095039">
    <property type="status" value="NOT_ANNOTATED_CDS"/>
    <property type="molecule type" value="Genomic_DNA"/>
</dbReference>
<dbReference type="EMBL" id="AC232300">
    <property type="status" value="NOT_ANNOTATED_CDS"/>
    <property type="molecule type" value="Genomic_DNA"/>
</dbReference>
<dbReference type="EMBL" id="AC232312">
    <property type="status" value="NOT_ANNOTATED_CDS"/>
    <property type="molecule type" value="Genomic_DNA"/>
</dbReference>
<dbReference type="EMBL" id="FJ770081">
    <property type="status" value="NOT_ANNOTATED_CDS"/>
    <property type="molecule type" value="Genomic_DNA"/>
</dbReference>
<dbReference type="EMBL" id="KF458461">
    <property type="status" value="NOT_ANNOTATED_CDS"/>
    <property type="molecule type" value="Genomic_DNA"/>
</dbReference>
<dbReference type="EMBL" id="KF511036">
    <property type="status" value="NOT_ANNOTATED_CDS"/>
    <property type="molecule type" value="Genomic_DNA"/>
</dbReference>
<dbReference type="EMBL" id="AF501281">
    <property type="protein sequence ID" value="AAO59914.1"/>
    <property type="molecule type" value="mRNA"/>
</dbReference>
<dbReference type="CCDS" id="CCDS47584.1">
    <molecule id="Q86UQ4-1"/>
</dbReference>
<dbReference type="RefSeq" id="NP_689914.3">
    <property type="nucleotide sequence ID" value="NM_152701.4"/>
</dbReference>
<dbReference type="SMR" id="Q86UQ4"/>
<dbReference type="BioGRID" id="127551">
    <property type="interactions" value="14"/>
</dbReference>
<dbReference type="FunCoup" id="Q86UQ4">
    <property type="interactions" value="94"/>
</dbReference>
<dbReference type="IntAct" id="Q86UQ4">
    <property type="interactions" value="6"/>
</dbReference>
<dbReference type="MINT" id="Q86UQ4"/>
<dbReference type="STRING" id="9606.ENSP00000411096"/>
<dbReference type="TCDB" id="3.A.1.211.18">
    <property type="family name" value="the atp-binding cassette (abc) superfamily"/>
</dbReference>
<dbReference type="CarbonylDB" id="Q86UQ4"/>
<dbReference type="GlyCosmos" id="Q86UQ4">
    <property type="glycosylation" value="4 sites, 1 glycan"/>
</dbReference>
<dbReference type="GlyGen" id="Q86UQ4">
    <property type="glycosylation" value="6 sites, 2 N-linked glycans (2 sites), 1 O-linked glycan (4 sites)"/>
</dbReference>
<dbReference type="iPTMnet" id="Q86UQ4"/>
<dbReference type="PhosphoSitePlus" id="Q86UQ4"/>
<dbReference type="BioMuta" id="ABCA13"/>
<dbReference type="DMDM" id="327478592"/>
<dbReference type="jPOST" id="Q86UQ4"/>
<dbReference type="MassIVE" id="Q86UQ4"/>
<dbReference type="PaxDb" id="9606-ENSP00000411096"/>
<dbReference type="PeptideAtlas" id="Q86UQ4"/>
<dbReference type="ProteomicsDB" id="69861">
    <molecule id="Q86UQ4-1"/>
</dbReference>
<dbReference type="ProteomicsDB" id="69862">
    <molecule id="Q86UQ4-2"/>
</dbReference>
<dbReference type="ProteomicsDB" id="69863">
    <molecule id="Q86UQ4-3"/>
</dbReference>
<dbReference type="Antibodypedia" id="51819">
    <property type="antibodies" value="68 antibodies from 14 providers"/>
</dbReference>
<dbReference type="DNASU" id="154664"/>
<dbReference type="Ensembl" id="ENST00000417403.5">
    <molecule id="Q86UQ4-2"/>
    <property type="protein sequence ID" value="ENSP00000409268.1"/>
    <property type="gene ID" value="ENSG00000179869.15"/>
</dbReference>
<dbReference type="GeneID" id="154664"/>
<dbReference type="KEGG" id="hsa:154664"/>
<dbReference type="MANE-Select" id="ENST00000435803.6">
    <property type="protein sequence ID" value="ENSP00000411096.1"/>
    <property type="RefSeq nucleotide sequence ID" value="NM_152701.5"/>
    <property type="RefSeq protein sequence ID" value="NP_689914.3"/>
</dbReference>
<dbReference type="UCSC" id="uc064dot.1">
    <molecule id="Q86UQ4-1"/>
    <property type="organism name" value="human"/>
</dbReference>
<dbReference type="AGR" id="HGNC:14638"/>
<dbReference type="CTD" id="154664"/>
<dbReference type="DisGeNET" id="154664"/>
<dbReference type="GeneCards" id="ABCA13"/>
<dbReference type="HGNC" id="HGNC:14638">
    <property type="gene designation" value="ABCA13"/>
</dbReference>
<dbReference type="MalaCards" id="ABCA13"/>
<dbReference type="MIM" id="607807">
    <property type="type" value="gene"/>
</dbReference>
<dbReference type="neXtProt" id="NX_Q86UQ4"/>
<dbReference type="OpenTargets" id="ENSG00000179869"/>
<dbReference type="PharmGKB" id="PA134925234"/>
<dbReference type="VEuPathDB" id="HostDB:ENSG00000179869"/>
<dbReference type="eggNOG" id="KOG0059">
    <property type="taxonomic scope" value="Eukaryota"/>
</dbReference>
<dbReference type="GeneTree" id="ENSGT00940000161703"/>
<dbReference type="HOGENOM" id="CLU_076113_0_0_1"/>
<dbReference type="InParanoid" id="Q86UQ4"/>
<dbReference type="OMA" id="PNQFQNI"/>
<dbReference type="OrthoDB" id="9833608at2759"/>
<dbReference type="PAN-GO" id="Q86UQ4">
    <property type="GO annotations" value="4 GO annotations based on evolutionary models"/>
</dbReference>
<dbReference type="PhylomeDB" id="Q86UQ4"/>
<dbReference type="TreeFam" id="TF105191"/>
<dbReference type="PathwayCommons" id="Q86UQ4"/>
<dbReference type="Reactome" id="R-HSA-6798695">
    <property type="pathway name" value="Neutrophil degranulation"/>
</dbReference>
<dbReference type="SignaLink" id="Q86UQ4"/>
<dbReference type="SIGNOR" id="Q86UQ4"/>
<dbReference type="BioGRID-ORCS" id="154664">
    <property type="hits" value="15 hits in 1153 CRISPR screens"/>
</dbReference>
<dbReference type="ChiTaRS" id="ABCA13">
    <property type="organism name" value="human"/>
</dbReference>
<dbReference type="GeneWiki" id="ABCA13"/>
<dbReference type="GenomeRNAi" id="154664"/>
<dbReference type="Pharos" id="Q86UQ4">
    <property type="development level" value="Tbio"/>
</dbReference>
<dbReference type="PRO" id="PR:Q86UQ4"/>
<dbReference type="Proteomes" id="UP000005640">
    <property type="component" value="Chromosome 7"/>
</dbReference>
<dbReference type="RNAct" id="Q86UQ4">
    <property type="molecule type" value="protein"/>
</dbReference>
<dbReference type="Bgee" id="ENSG00000179869">
    <property type="expression patterns" value="Expressed in bronchial epithelial cell and 93 other cell types or tissues"/>
</dbReference>
<dbReference type="ExpressionAtlas" id="Q86UQ4">
    <property type="expression patterns" value="baseline and differential"/>
</dbReference>
<dbReference type="GO" id="GO:0035577">
    <property type="term" value="C:azurophil granule membrane"/>
    <property type="evidence" value="ECO:0000304"/>
    <property type="project" value="Reactome"/>
</dbReference>
<dbReference type="GO" id="GO:0043231">
    <property type="term" value="C:intracellular membrane-bounded organelle"/>
    <property type="evidence" value="ECO:0000318"/>
    <property type="project" value="GO_Central"/>
</dbReference>
<dbReference type="GO" id="GO:0097708">
    <property type="term" value="C:intracellular vesicle"/>
    <property type="evidence" value="ECO:0000314"/>
    <property type="project" value="UniProtKB"/>
</dbReference>
<dbReference type="GO" id="GO:0005886">
    <property type="term" value="C:plasma membrane"/>
    <property type="evidence" value="ECO:0000304"/>
    <property type="project" value="Reactome"/>
</dbReference>
<dbReference type="GO" id="GO:0030667">
    <property type="term" value="C:secretory granule membrane"/>
    <property type="evidence" value="ECO:0000304"/>
    <property type="project" value="Reactome"/>
</dbReference>
<dbReference type="GO" id="GO:0140359">
    <property type="term" value="F:ABC-type transporter activity"/>
    <property type="evidence" value="ECO:0007669"/>
    <property type="project" value="InterPro"/>
</dbReference>
<dbReference type="GO" id="GO:0005524">
    <property type="term" value="F:ATP binding"/>
    <property type="evidence" value="ECO:0007669"/>
    <property type="project" value="UniProtKB-KW"/>
</dbReference>
<dbReference type="GO" id="GO:0016887">
    <property type="term" value="F:ATP hydrolysis activity"/>
    <property type="evidence" value="ECO:0007669"/>
    <property type="project" value="InterPro"/>
</dbReference>
<dbReference type="GO" id="GO:0042626">
    <property type="term" value="F:ATPase-coupled transmembrane transporter activity"/>
    <property type="evidence" value="ECO:0000318"/>
    <property type="project" value="GO_Central"/>
</dbReference>
<dbReference type="GO" id="GO:0005319">
    <property type="term" value="F:lipid transporter activity"/>
    <property type="evidence" value="ECO:0000318"/>
    <property type="project" value="GO_Central"/>
</dbReference>
<dbReference type="GO" id="GO:0035627">
    <property type="term" value="P:ceramide transport"/>
    <property type="evidence" value="ECO:0000250"/>
    <property type="project" value="UniProtKB"/>
</dbReference>
<dbReference type="GO" id="GO:0006869">
    <property type="term" value="P:lipid transport"/>
    <property type="evidence" value="ECO:0000318"/>
    <property type="project" value="GO_Central"/>
</dbReference>
<dbReference type="GO" id="GO:0032376">
    <property type="term" value="P:positive regulation of cholesterol transport"/>
    <property type="evidence" value="ECO:0000314"/>
    <property type="project" value="UniProtKB"/>
</dbReference>
<dbReference type="GO" id="GO:1900244">
    <property type="term" value="P:positive regulation of synaptic vesicle endocytosis"/>
    <property type="evidence" value="ECO:0000250"/>
    <property type="project" value="UniProtKB"/>
</dbReference>
<dbReference type="CDD" id="cd03263">
    <property type="entry name" value="ABC_subfamily_A"/>
    <property type="match status" value="2"/>
</dbReference>
<dbReference type="FunFam" id="3.40.50.300:FF:000689">
    <property type="entry name" value="ATP binding cassette subfamily A member 12"/>
    <property type="match status" value="1"/>
</dbReference>
<dbReference type="FunFam" id="3.40.50.300:FF:000298">
    <property type="entry name" value="ATP-binding cassette sub-family A member 12"/>
    <property type="match status" value="1"/>
</dbReference>
<dbReference type="Gene3D" id="3.40.50.300">
    <property type="entry name" value="P-loop containing nucleotide triphosphate hydrolases"/>
    <property type="match status" value="2"/>
</dbReference>
<dbReference type="InterPro" id="IPR003593">
    <property type="entry name" value="AAA+_ATPase"/>
</dbReference>
<dbReference type="InterPro" id="IPR013525">
    <property type="entry name" value="ABC2_TM"/>
</dbReference>
<dbReference type="InterPro" id="IPR003439">
    <property type="entry name" value="ABC_transporter-like_ATP-bd"/>
</dbReference>
<dbReference type="InterPro" id="IPR026082">
    <property type="entry name" value="ABCA"/>
</dbReference>
<dbReference type="InterPro" id="IPR027417">
    <property type="entry name" value="P-loop_NTPase"/>
</dbReference>
<dbReference type="InterPro" id="IPR056264">
    <property type="entry name" value="R2_ABCA1-4-like"/>
</dbReference>
<dbReference type="PANTHER" id="PTHR19229:SF113">
    <property type="entry name" value="ATP-BINDING CASSETTE SUB-FAMILY A MEMBER 13"/>
    <property type="match status" value="1"/>
</dbReference>
<dbReference type="PANTHER" id="PTHR19229">
    <property type="entry name" value="ATP-BINDING CASSETTE TRANSPORTER SUBFAMILY A ABCA"/>
    <property type="match status" value="1"/>
</dbReference>
<dbReference type="Pfam" id="PF12698">
    <property type="entry name" value="ABC2_membrane_3"/>
    <property type="match status" value="2"/>
</dbReference>
<dbReference type="Pfam" id="PF00005">
    <property type="entry name" value="ABC_tran"/>
    <property type="match status" value="2"/>
</dbReference>
<dbReference type="Pfam" id="PF23321">
    <property type="entry name" value="R1_ABCA1"/>
    <property type="match status" value="1"/>
</dbReference>
<dbReference type="SMART" id="SM00382">
    <property type="entry name" value="AAA"/>
    <property type="match status" value="2"/>
</dbReference>
<dbReference type="SUPFAM" id="SSF52540">
    <property type="entry name" value="P-loop containing nucleoside triphosphate hydrolases"/>
    <property type="match status" value="2"/>
</dbReference>
<dbReference type="PROSITE" id="PS50893">
    <property type="entry name" value="ABC_TRANSPORTER_2"/>
    <property type="match status" value="2"/>
</dbReference>
<protein>
    <recommendedName>
        <fullName evidence="11">ATP-binding cassette sub-family A member 13</fullName>
        <ecNumber evidence="1">7.6.2.-</ecNumber>
    </recommendedName>
</protein>
<proteinExistence type="evidence at protein level"/>
<keyword id="KW-0025">Alternative splicing</keyword>
<keyword id="KW-0067">ATP-binding</keyword>
<keyword id="KW-0968">Cytoplasmic vesicle</keyword>
<keyword id="KW-0445">Lipid transport</keyword>
<keyword id="KW-0472">Membrane</keyword>
<keyword id="KW-0547">Nucleotide-binding</keyword>
<keyword id="KW-1267">Proteomics identification</keyword>
<keyword id="KW-1185">Reference proteome</keyword>
<keyword id="KW-0677">Repeat</keyword>
<keyword id="KW-1278">Translocase</keyword>
<keyword id="KW-0812">Transmembrane</keyword>
<keyword id="KW-1133">Transmembrane helix</keyword>
<keyword id="KW-0813">Transport</keyword>
<reference key="1">
    <citation type="journal article" date="2002" name="Cytogenet. Genome Res.">
        <title>The human ATP binding cassette gene ABCA13, located on chromosome 7p12.3, encodes a 5058 amino acid protein with an extracellular domain encoded in part by a 4.8-kb conserved exon.</title>
        <authorList>
            <person name="Prades C."/>
            <person name="Arnould I."/>
            <person name="Annilo T."/>
            <person name="Shulenin S."/>
            <person name="Chen Z.-Q."/>
            <person name="Orosco L."/>
            <person name="Triunfol M."/>
            <person name="Devaud C."/>
            <person name="Maintoux-Larois C."/>
            <person name="Lafargue C."/>
            <person name="Lemoine C."/>
            <person name="Denefle P."/>
            <person name="Rosier M."/>
            <person name="Dean M."/>
        </authorList>
    </citation>
    <scope>NUCLEOTIDE SEQUENCE [MRNA] (ISOFORM 1)</scope>
    <scope>ALTERNATIVE SPLICING (ISOFORM 3)</scope>
    <scope>TISSUE SPECIFICITY</scope>
    <source>
        <tissue>Lung</tissue>
    </source>
</reference>
<reference key="2">
    <citation type="journal article" date="2013" name="Gene">
        <title>Evidence for an alternative genomic structure, mRNA and protein sequence of human ABCA13.</title>
        <authorList>
            <person name="Maess M.B."/>
            <person name="Stolle K."/>
            <person name="Cullen P."/>
            <person name="Lorkowski S."/>
        </authorList>
    </citation>
    <scope>NUCLEOTIDE SEQUENCE [MRNA] (ISOFORMS 5; 6 AND 7)</scope>
    <scope>ALTERNATIVE SPLICING</scope>
    <scope>TISSUE SPECIFICITY</scope>
</reference>
<reference key="3">
    <citation type="journal article" date="2004" name="Nat. Genet.">
        <title>Complete sequencing and characterization of 21,243 full-length human cDNAs.</title>
        <authorList>
            <person name="Ota T."/>
            <person name="Suzuki Y."/>
            <person name="Nishikawa T."/>
            <person name="Otsuki T."/>
            <person name="Sugiyama T."/>
            <person name="Irie R."/>
            <person name="Wakamatsu A."/>
            <person name="Hayashi K."/>
            <person name="Sato H."/>
            <person name="Nagai K."/>
            <person name="Kimura K."/>
            <person name="Makita H."/>
            <person name="Sekine M."/>
            <person name="Obayashi M."/>
            <person name="Nishi T."/>
            <person name="Shibahara T."/>
            <person name="Tanaka T."/>
            <person name="Ishii S."/>
            <person name="Yamamoto J."/>
            <person name="Saito K."/>
            <person name="Kawai Y."/>
            <person name="Isono Y."/>
            <person name="Nakamura Y."/>
            <person name="Nagahari K."/>
            <person name="Murakami K."/>
            <person name="Yasuda T."/>
            <person name="Iwayanagi T."/>
            <person name="Wagatsuma M."/>
            <person name="Shiratori A."/>
            <person name="Sudo H."/>
            <person name="Hosoiri T."/>
            <person name="Kaku Y."/>
            <person name="Kodaira H."/>
            <person name="Kondo H."/>
            <person name="Sugawara M."/>
            <person name="Takahashi M."/>
            <person name="Kanda K."/>
            <person name="Yokoi T."/>
            <person name="Furuya T."/>
            <person name="Kikkawa E."/>
            <person name="Omura Y."/>
            <person name="Abe K."/>
            <person name="Kamihara K."/>
            <person name="Katsuta N."/>
            <person name="Sato K."/>
            <person name="Tanikawa M."/>
            <person name="Yamazaki M."/>
            <person name="Ninomiya K."/>
            <person name="Ishibashi T."/>
            <person name="Yamashita H."/>
            <person name="Murakawa K."/>
            <person name="Fujimori K."/>
            <person name="Tanai H."/>
            <person name="Kimata M."/>
            <person name="Watanabe M."/>
            <person name="Hiraoka S."/>
            <person name="Chiba Y."/>
            <person name="Ishida S."/>
            <person name="Ono Y."/>
            <person name="Takiguchi S."/>
            <person name="Watanabe S."/>
            <person name="Yosida M."/>
            <person name="Hotuta T."/>
            <person name="Kusano J."/>
            <person name="Kanehori K."/>
            <person name="Takahashi-Fujii A."/>
            <person name="Hara H."/>
            <person name="Tanase T.-O."/>
            <person name="Nomura Y."/>
            <person name="Togiya S."/>
            <person name="Komai F."/>
            <person name="Hara R."/>
            <person name="Takeuchi K."/>
            <person name="Arita M."/>
            <person name="Imose N."/>
            <person name="Musashino K."/>
            <person name="Yuuki H."/>
            <person name="Oshima A."/>
            <person name="Sasaki N."/>
            <person name="Aotsuka S."/>
            <person name="Yoshikawa Y."/>
            <person name="Matsunawa H."/>
            <person name="Ichihara T."/>
            <person name="Shiohata N."/>
            <person name="Sano S."/>
            <person name="Moriya S."/>
            <person name="Momiyama H."/>
            <person name="Satoh N."/>
            <person name="Takami S."/>
            <person name="Terashima Y."/>
            <person name="Suzuki O."/>
            <person name="Nakagawa S."/>
            <person name="Senoh A."/>
            <person name="Mizoguchi H."/>
            <person name="Goto Y."/>
            <person name="Shimizu F."/>
            <person name="Wakebe H."/>
            <person name="Hishigaki H."/>
            <person name="Watanabe T."/>
            <person name="Sugiyama A."/>
            <person name="Takemoto M."/>
            <person name="Kawakami B."/>
            <person name="Yamazaki M."/>
            <person name="Watanabe K."/>
            <person name="Kumagai A."/>
            <person name="Itakura S."/>
            <person name="Fukuzumi Y."/>
            <person name="Fujimori Y."/>
            <person name="Komiyama M."/>
            <person name="Tashiro H."/>
            <person name="Tanigami A."/>
            <person name="Fujiwara T."/>
            <person name="Ono T."/>
            <person name="Yamada K."/>
            <person name="Fujii Y."/>
            <person name="Ozaki K."/>
            <person name="Hirao M."/>
            <person name="Ohmori Y."/>
            <person name="Kawabata A."/>
            <person name="Hikiji T."/>
            <person name="Kobatake N."/>
            <person name="Inagaki H."/>
            <person name="Ikema Y."/>
            <person name="Okamoto S."/>
            <person name="Okitani R."/>
            <person name="Kawakami T."/>
            <person name="Noguchi S."/>
            <person name="Itoh T."/>
            <person name="Shigeta K."/>
            <person name="Senba T."/>
            <person name="Matsumura K."/>
            <person name="Nakajima Y."/>
            <person name="Mizuno T."/>
            <person name="Morinaga M."/>
            <person name="Sasaki M."/>
            <person name="Togashi T."/>
            <person name="Oyama M."/>
            <person name="Hata H."/>
            <person name="Watanabe M."/>
            <person name="Komatsu T."/>
            <person name="Mizushima-Sugano J."/>
            <person name="Satoh T."/>
            <person name="Shirai Y."/>
            <person name="Takahashi Y."/>
            <person name="Nakagawa K."/>
            <person name="Okumura K."/>
            <person name="Nagase T."/>
            <person name="Nomura N."/>
            <person name="Kikuchi H."/>
            <person name="Masuho Y."/>
            <person name="Yamashita R."/>
            <person name="Nakai K."/>
            <person name="Yada T."/>
            <person name="Nakamura Y."/>
            <person name="Ohara O."/>
            <person name="Isogai T."/>
            <person name="Sugano S."/>
        </authorList>
    </citation>
    <scope>NUCLEOTIDE SEQUENCE [LARGE SCALE MRNA] (ISOFORM 2)</scope>
    <scope>NUCLEOTIDE SEQUENCE [LARGE SCALE MRNA] OF 4659-5058 (ISOFORM 1)</scope>
    <source>
        <tissue>Thymus</tissue>
        <tissue>Tongue</tissue>
    </source>
</reference>
<reference key="4">
    <citation type="journal article" date="2003" name="Nature">
        <title>The DNA sequence of human chromosome 7.</title>
        <authorList>
            <person name="Hillier L.W."/>
            <person name="Fulton R.S."/>
            <person name="Fulton L.A."/>
            <person name="Graves T.A."/>
            <person name="Pepin K.H."/>
            <person name="Wagner-McPherson C."/>
            <person name="Layman D."/>
            <person name="Maas J."/>
            <person name="Jaeger S."/>
            <person name="Walker R."/>
            <person name="Wylie K."/>
            <person name="Sekhon M."/>
            <person name="Becker M.C."/>
            <person name="O'Laughlin M.D."/>
            <person name="Schaller M.E."/>
            <person name="Fewell G.A."/>
            <person name="Delehaunty K.D."/>
            <person name="Miner T.L."/>
            <person name="Nash W.E."/>
            <person name="Cordes M."/>
            <person name="Du H."/>
            <person name="Sun H."/>
            <person name="Edwards J."/>
            <person name="Bradshaw-Cordum H."/>
            <person name="Ali J."/>
            <person name="Andrews S."/>
            <person name="Isak A."/>
            <person name="Vanbrunt A."/>
            <person name="Nguyen C."/>
            <person name="Du F."/>
            <person name="Lamar B."/>
            <person name="Courtney L."/>
            <person name="Kalicki J."/>
            <person name="Ozersky P."/>
            <person name="Bielicki L."/>
            <person name="Scott K."/>
            <person name="Holmes A."/>
            <person name="Harkins R."/>
            <person name="Harris A."/>
            <person name="Strong C.M."/>
            <person name="Hou S."/>
            <person name="Tomlinson C."/>
            <person name="Dauphin-Kohlberg S."/>
            <person name="Kozlowicz-Reilly A."/>
            <person name="Leonard S."/>
            <person name="Rohlfing T."/>
            <person name="Rock S.M."/>
            <person name="Tin-Wollam A.-M."/>
            <person name="Abbott A."/>
            <person name="Minx P."/>
            <person name="Maupin R."/>
            <person name="Strowmatt C."/>
            <person name="Latreille P."/>
            <person name="Miller N."/>
            <person name="Johnson D."/>
            <person name="Murray J."/>
            <person name="Woessner J.P."/>
            <person name="Wendl M.C."/>
            <person name="Yang S.-P."/>
            <person name="Schultz B.R."/>
            <person name="Wallis J.W."/>
            <person name="Spieth J."/>
            <person name="Bieri T.A."/>
            <person name="Nelson J.O."/>
            <person name="Berkowicz N."/>
            <person name="Wohldmann P.E."/>
            <person name="Cook L.L."/>
            <person name="Hickenbotham M.T."/>
            <person name="Eldred J."/>
            <person name="Williams D."/>
            <person name="Bedell J.A."/>
            <person name="Mardis E.R."/>
            <person name="Clifton S.W."/>
            <person name="Chissoe S.L."/>
            <person name="Marra M.A."/>
            <person name="Raymond C."/>
            <person name="Haugen E."/>
            <person name="Gillett W."/>
            <person name="Zhou Y."/>
            <person name="James R."/>
            <person name="Phelps K."/>
            <person name="Iadanoto S."/>
            <person name="Bubb K."/>
            <person name="Simms E."/>
            <person name="Levy R."/>
            <person name="Clendenning J."/>
            <person name="Kaul R."/>
            <person name="Kent W.J."/>
            <person name="Furey T.S."/>
            <person name="Baertsch R.A."/>
            <person name="Brent M.R."/>
            <person name="Keibler E."/>
            <person name="Flicek P."/>
            <person name="Bork P."/>
            <person name="Suyama M."/>
            <person name="Bailey J.A."/>
            <person name="Portnoy M.E."/>
            <person name="Torrents D."/>
            <person name="Chinwalla A.T."/>
            <person name="Gish W.R."/>
            <person name="Eddy S.R."/>
            <person name="McPherson J.D."/>
            <person name="Olson M.V."/>
            <person name="Eichler E.E."/>
            <person name="Green E.D."/>
            <person name="Waterston R.H."/>
            <person name="Wilson R.K."/>
        </authorList>
    </citation>
    <scope>NUCLEOTIDE SEQUENCE [LARGE SCALE GENOMIC DNA]</scope>
</reference>
<reference key="5">
    <citation type="submission" date="2002-04" db="EMBL/GenBank/DDBJ databases">
        <title>Cloning of two novel ABC transporters, ABCA12 and ABCA13, tentatively involved in lipid homeostasis.</title>
        <authorList>
            <person name="Schaap F.G."/>
            <person name="van Wijland M.J.A."/>
            <person name="Groen A.K."/>
        </authorList>
    </citation>
    <scope>NUCLEOTIDE SEQUENCE [MRNA] OF 2933-5058 (ISOFORM 4)</scope>
    <scope>VARIANT PHE-3851</scope>
</reference>
<reference key="6">
    <citation type="journal article" date="2021" name="J. Biol. Chem.">
        <title>ABCA13 dysfunction associated with psychiatric disorders causes impaired cholesterol trafficking.</title>
        <authorList>
            <person name="Nakato M."/>
            <person name="Shiranaga N."/>
            <person name="Tomioka M."/>
            <person name="Watanabe H."/>
            <person name="Kurisu J."/>
            <person name="Kengaku M."/>
            <person name="Komura N."/>
            <person name="Ando H."/>
            <person name="Kimura Y."/>
            <person name="Kioka N."/>
            <person name="Ueda K."/>
        </authorList>
    </citation>
    <scope>SUBCELLULAR LOCATION</scope>
    <scope>FUNCTION</scope>
</reference>
<organism>
    <name type="scientific">Homo sapiens</name>
    <name type="common">Human</name>
    <dbReference type="NCBI Taxonomy" id="9606"/>
    <lineage>
        <taxon>Eukaryota</taxon>
        <taxon>Metazoa</taxon>
        <taxon>Chordata</taxon>
        <taxon>Craniata</taxon>
        <taxon>Vertebrata</taxon>
        <taxon>Euteleostomi</taxon>
        <taxon>Mammalia</taxon>
        <taxon>Eutheria</taxon>
        <taxon>Euarchontoglires</taxon>
        <taxon>Primates</taxon>
        <taxon>Haplorrhini</taxon>
        <taxon>Catarrhini</taxon>
        <taxon>Hominidae</taxon>
        <taxon>Homo</taxon>
    </lineage>
</organism>
<comment type="function">
    <text evidence="6">May mediate the cholesterol and gangliosides transport from the plasma membrane to intracellular vesicles in an ATP hydrolysis dependent manner, thus playing a role in their internalization by endocytic retrograde transport and may also participate in the endocytosis of synaptic vesicle in cortical neurons.</text>
</comment>
<comment type="catalytic activity">
    <reaction evidence="1">
        <text>cholesterol(in) + ATP + H2O = cholesterol(out) + ADP + phosphate + H(+)</text>
        <dbReference type="Rhea" id="RHEA:39051"/>
        <dbReference type="ChEBI" id="CHEBI:15377"/>
        <dbReference type="ChEBI" id="CHEBI:15378"/>
        <dbReference type="ChEBI" id="CHEBI:16113"/>
        <dbReference type="ChEBI" id="CHEBI:30616"/>
        <dbReference type="ChEBI" id="CHEBI:43474"/>
        <dbReference type="ChEBI" id="CHEBI:456216"/>
    </reaction>
</comment>
<comment type="subcellular location">
    <subcellularLocation>
        <location evidence="6">Cytoplasmic vesicle membrane</location>
        <topology evidence="11">Multi-pass membrane protein</topology>
    </subcellularLocation>
</comment>
<comment type="alternative products">
    <event type="alternative splicing"/>
    <isoform>
        <id>Q86UQ4-1</id>
        <name>1</name>
        <sequence type="displayed"/>
    </isoform>
    <isoform>
        <id>Q86UQ4-2</id>
        <name>2</name>
        <sequence type="described" ref="VSP_021069 VSP_021070"/>
    </isoform>
    <isoform>
        <id>Q86UQ4-3</id>
        <name>3</name>
        <sequence type="described" ref="VSP_021068"/>
    </isoform>
    <isoform>
        <id>Q86UQ4-4</id>
        <name>4</name>
        <sequence type="described" ref="VSP_054634"/>
    </isoform>
    <isoform>
        <id>Q86UQ4-5</id>
        <name>5</name>
        <sequence type="described" ref="VSP_054633 VSP_054634"/>
    </isoform>
    <isoform>
        <id>Q86UQ4-6</id>
        <name>6</name>
        <sequence type="described" ref="VSP_054633 VSP_054634 VSP_054636"/>
    </isoform>
    <isoform>
        <id>Q86UQ4-7</id>
        <name>7</name>
        <sequence type="described" ref="VSP_054633 VSP_054634 VSP_054635"/>
    </isoform>
</comment>
<comment type="tissue specificity">
    <text evidence="4 5">Significantly expressed in the bone marrow, trachea, testis, thyroid and lung as well as in skin fibroblasts.</text>
</comment>
<comment type="miscellaneous">
    <molecule>Isoform 2</molecule>
    <text evidence="11">May be produced at very low levels due to a premature stop codon in the mRNA, leading to nonsense-mediated mRNA decay.</text>
</comment>
<comment type="similarity">
    <text evidence="11">Belongs to the ABC transporter superfamily.</text>
</comment>
<comment type="sequence caution" evidence="11">
    <conflict type="erroneous initiation">
        <sequence resource="EMBL-CDS" id="BAC03623"/>
    </conflict>
    <text>Truncated N-terminus.</text>
</comment>
<comment type="sequence caution" evidence="11">
    <conflict type="erroneous termination">
        <sequence resource="EMBL-CDS" id="BAC86492"/>
    </conflict>
    <text>Truncated C-terminus.</text>
</comment>
<comment type="sequence caution" evidence="11">
    <conflict type="frameshift">
        <sequence resource="EMBL-CDS" id="BAC86492"/>
    </conflict>
</comment>
<comment type="online information" name="ABCMdb">
    <link uri="http://abcm2.hegelab.org/search"/>
    <text>Database for mutations in ABC proteins</text>
</comment>
<sequence length="5058" mass="576160">MGHAGCQFKALLWKNWLCRLRNPVLFLAEFFWPCILFVILTVLRFQEPPRYRDICYLQPRDLPSCGVIPFVQSLLCNTGSRCRNFSYEGSMEHHFRLSRFQTAADPKKVNNLAFLKEIQDLAEEIHGMMDKAKNLKRLWVERSNTPDSSYGSSFFTMDLNKTEEVILKLESLHQQPHIWDFLLLLPRLHTSHDHVEDGMDVAVNLLQTILNSLISLEDLDWLPLNQTFSQVSELVLNVTISTLTFLQQHGVAVTEPVYHLSMQNIVWDPQKVQYDLKSQFGFDDLHTEQILNSSAELKEIPTDTSLEKMVCSVLSSTSEDEAEKWGHVGGCHPKWSEAKNYLVHAVSWLRVYQQVFVQWQQGSLLQKTLTGMGHSLEALRNQFEEESKPWKVVEALHTALLLLNDSLSADGPKDNHTFPKILQHLWKLQSLLQNLPQWPALKRFLQLDGALRNAIAQNLHFVQEVLICLETSANDFKWFELNQLKLEKDVFFWELKQMLAKNAVCPNGRFSEKEVFLPPGNSSIWGGLQGLLCYCNSSETSVLNKLLGSVEDADRILQEVITWHKNMSVLIPEEYLDWQELEMQLSEASLSCTRLFLLLGADPSPENDVFSSDCKHQLVSTVIFHTLEKTQFFLEQAYYWKAFKKFIRKTCEVAQYVNMQESFQNRLLAFPEESPCFEENMDWKMISDNYFQFLNNLLKSPTASISRALNFTKHLLMMEKKLHTLEDEQMNFLLSFVEFFEKLLLPNLFDSSIVPSFHSLPSLTEDILNISSLWTNHLKSLKRDPSATDAQKLLEFGNEVIWKMQTLGSHWIRKEPKNLLRFIELILFEINPKLLELWAYGISKGKRAKLENFFTLLNFSVPENEILSTSFNFSQLFHSDWPKSPAMNIDFVRLSEAIITSLHEFGFLEQEQISEALNTVYAIRNASDLFSALSEPQKQEVDKILTHIHLNVFQDKDSALLLQIYSSFYRYIYELLNIQSRGSSLTFLTQISKHILDIIKQFNFQNISKAFAFLFKTAEVLGGISNVSYCQQLLSIFNFLELQAQSFMSTEGQELEVIHTTLTGLKQLLIIDEDFRISLFQYMSQFFNSSVEDLLDNKCLISDNKHISSVNYSTSEESSFVFPLAQIFSNLSANVSVFNKFMSIHCTVSWLQMWTEIWETISQLFKFDMNVFTSLHHGFTQLLDELEDDVKVSKSCQGILPTHNVARLILNLFKNVTQANDFHNWEDFLDLRDFLVALGNALVSVKKLNLEQVEKSLFTMEAALHQLKTFPFNESTSREFLNSLLEVFIEFSSTSEYIVRNLDSINDFLSNNLTNYGEKFENIITELREAIVFLRNVSHDRDLFSCADIFQNVTECILEDGFLYVNTSQRMLRILDTLNSTFSSENTISSLKGCIVWLDVINHLYLLSNSSFSQGHLQNILGNFRDIENKMNSILKIVTWVLNIKKPLCSSNGSHINCVNIYLKDVTDFLNIVLTTVFEKEKKPKFEILLALLNDSTKQVRMSINNLTTDFDFASQSNWRYFTELILRPIEMSDEIPNQFQNIWLHLITLGKEFQKLVKGIYFNILENNSSSKTENLLNIFATSPKEKDVNSVGNSIYHLASYLAFSLSHDLQNSPKIIISPEIMKATGLGIQLIRDVFNSLMPVVHHTSPQNAGYMQALKKVTSVMRTLKKADIDLLVDQLEQVSVNLMDFFKNISSVGTGNLVVNLLVGLMEKFADSSHSWNVNHLLQLSRLFPKDVVDAVIDVYYVLPHAVRLLQGVPGKNITEGLKDVYSFTLLHGITISNITKEDFAIVIKILLDTIELVSDKPDIISEALACFPVVWCWNHTNSGFRQNSKIDPCNVHGLMSSSFYGKVASILDHFHLSPQGEDSPCSNESSRMEITRKVVCIIHELVDWNSILLELSEVFHVNISLVKTVQKFWHKILPFVPPSINQTRDSISELCPSGSIKQVALQIIEKLKNVNFTKVTSGENILDKLSSLNKILNINEDTETSVQNIISSNLERTVQLISEDWSLEKSTHNLLSLFMMLQNANVTGSSLEALSSFIEKSETPYNFEELWPKFQQIMKDLTQDFRIRHLLSEMNKGIKSINSMALQKITLQFAHFLEILDSPSLKTLEIIEDFLLVTKNWLQEYANEDYSRMIETLFIPVTNESSTEDIALLAKAIATFWGSLKNISRAGNFDVAFLTHLLNQEQLTNFSVVQLLFENILINLINNLAGNSQEAAWNLNDTDLQIMNFINLILNHMQSETSRKTVLSLRSIVDFTEQFLKTFFSLFLKEDSENKISLLLKYFHKDVIAEMSFVPKDKILEILKLDQFLTLMIQDRLMNIFSSLKETIYHLMKSSFILDNGEFYFDTHQGLKFMQDLFNALLRETSMKNKTENNIDFFTVVSQLFFHVNKSEDLFKLNQDLGSALHLVRECSTEMARLLDTILHSPNKDFYALYPTLQEVILANLTDLLFFINNSFPLRNRATLEITKRLVGAISRASEESHVLKPLLEMSGTLVMLLNDSADLRDLATSMDSIVKLLKLVKKVSGKMSTVFKTHFISNTKDSVKFFDTLYSIMQQSVQNLVKEIATLKKIDHFTFEKINDLLVPFLDLAFEMIGVEPYISSNSDIFSMSPSILSYMNQSKDFSDILEEIAEFLTSVKMNLEDMRSLAVAFNNETQTFSMDSVNLREEILGCLVPINNITNQMDFLYPNPISTHSGPQDIKWEIIHEVIPFLDKILSQNSTEIGSFLKMVICLTLEALWKNLKKDNWNVSNVLMTFTQHPNNLLKTIETVLEASSGIKSDYEGDLNKSLYFDTPLSQNITHHQLEKAIHNVLSRIALWRKGLLFNNSEWITSTRTLFQPLFEIFIKATTGKNVTSEKEERTKKEMIDFPYSFKPFFCLEKYLGGLFVLTKYWQQIPLTDQSVVEICEVFQQTVKPSEAMEMLQKVKMMVVRVLTIVAENPSWTKDILCATLSCKQNGIRHLILSAIQGVTLAQDHFQEIEKIWSSPNQLNCESLSKNLSSTLESFKSSLENATGQDCTSQPRLETVQQHLYMLAKSLEETWSSGNPIMTFLSNFTVTEDVKIKDLMKNITKLTEELRSSIQISNETIHSILEANISHSKVLFSALTVALSGKCDQEILHLLLTFPKGEKSWIAAEELCSLPGSKVYSLIVLLSRNLDVRAFIYKTLMPSEANGLLNSLLDIVSSLSALLAKAQHVFEYLPEFLHTFKITALLETLDFQQVSQNVQARSSAFGSFQFVMKMVCKDQASFLSDSNMFINLPRVKELLEDDKEKFNIPEDSTPFCLKLYQEILQLPNGALVWTFLKPILHGKILYTPNTPEINKVIQKANYTFYIVDKLKTLSETLLEMSSLFQRSGSGQMFNQLQEALRNKFVRNFVENQLHIDVDKLTEKLQTYGGLLDEMFNHAGAGRFRFLGSILVNLSSCVALNRFQALQSVDILETKAHELLQQNSFLASIIFSNSLFDKNFRSESVKLPPHVSYTIRTNVLYSVRTDVVKNPSWKFHPQNLPADGFKYNYVFAPLQDMIERAIILVQTGQEALEPAAQTQAAPYPCHTSDLFLNNVGFFFPLIMMLTWMVSVASMVRKLVYEQEIQIEEYMRMMGVHPVIHFLAWFLENMAVLTISSATLAIVLKTSGIFAHSNTFIVFLFLLDFGMSVVMLSYLLSAFFSQANTAALCTSLVYMISFLPYIVLLVLHNQLSFVNQTFLCLLSTTAFGQGVFFITFLEGQETGIQWNNMYQALEQGGMTFGWVCWMILFDSSLYFLCGWYLSNLIPGTFGLRKPWYFPFTASYWKSVGFLVEKRQYFLSSSLFFFNENFDNKGSSLQNREGELEGSAPGVTLVSVTKEYEGHKAVVQDLSLTFYRDQITALLGTNGAGKTTIISMLTGLHPPTSGTIIINGKNLQTDLSRVRMELGVCPQQDILLDNLTVREHLLLFASIKAPQWTKKELHQQVNQTLQDVDLTQHQHKQTRALSGGLKRKLSLGIAFMGMSRTVVLDEPTSGVDPCSRHSLWDILLKYREGRTIIFTTHHLDEAEALSDRVAVLQHGRLRCCGPPFCLKEAYGQGLRLTLTRQPSVLEAHDLKDMACVTSLIKIYIPQAFLKDSSGSELTYTIPKDTDKACLKGLFQALDENLHQLHLTGYGISDTTLEEVFLMLLQDSNKKSHIALGTESELQNHRPTGHLSGYCGSLARPATVQGVQLLRAQVAAILARRLRRTLRAGKSTLADLLLPVLFVALAMGLFMVRPLATEYPPLRLTPGHYQRAETYFFSSGGDNLDLTRVLLRKFRDQDLPCADLNPRQKNSSCWRTDPFSHPEFQDSCGCLKCPNRSASAPYLTNHLGHTLLNLSGFNMEEYLLAPSEKPRLGGWSFGLKIPSEAGGANGNISKPPTLAKVWYNQKGFHSLPSYLNHLNNLILWQHLPPTVDWRQYGITLYSHPYGGALLNEDKILESIRQCGVALCIVLGFSILSASIGSSVVRDRVIGAKRLQHISGLGYRMYWFTNFLYDMLFYLVSVCLCVAVIVAFQLTAFTFRKNLAATALLLSLFGYATLPWMYLMSRIFSSSDVAFISYVSLNFIFGLCTMLITIMPRLLAIISKAKNLQNIYDVLKWVFTIFPQFCLGQGLVELCYNQIKYDLTHNFGIDSYVSPFEMNFLGWIFVQLASQGTVLLLLRVLLHWDLLRWPRGHSTLQGTVKSSKDTDVEKEEKRVFEGRTNGDILVLYNLSKHYRRFFQNIIAVQDISLGIPKGECFGLLGVNGAGKSTTFKMLNGEVSLTSGHAIIRTPMGDAVDLSSAGTAGVLIGYCPQQDALDELLTGWEHLYYYCSLRGIPRQCIPEVAGDLIRRLHLEAHADKPVATYSGGTKRKLSTALALVGKPDILLLDEPSSGMDPCSKRYLWQTIMKEVREGCAAVLTSHSMEECEALCTRLAIMVNGSFKCLGSPQHIKNRFGDGYTVKVWLCKEANQHCTVSDHLKLYFPGIQFKGQHLNLLEYHVPKRWGCLADLFKVIENNKTFLNIKHYSINQTTLEQVFINFASEQQQTLQSTLDPSTDSHHTHHLPI</sequence>
<name>ABCAD_HUMAN</name>
<feature type="chain" id="PRO_0000253573" description="ATP-binding cassette sub-family A member 13">
    <location>
        <begin position="1"/>
        <end position="5058"/>
    </location>
</feature>
<feature type="transmembrane region" description="Helical" evidence="2">
    <location>
        <begin position="23"/>
        <end position="43"/>
    </location>
</feature>
<feature type="transmembrane region" description="Helical" evidence="2">
    <location>
        <begin position="3568"/>
        <end position="3588"/>
    </location>
</feature>
<feature type="transmembrane region" description="Helical" evidence="2">
    <location>
        <begin position="3607"/>
        <end position="3627"/>
    </location>
</feature>
<feature type="transmembrane region" description="Helical" evidence="2">
    <location>
        <begin position="3648"/>
        <end position="3668"/>
    </location>
</feature>
<feature type="transmembrane region" description="Helical" evidence="2">
    <location>
        <begin position="3679"/>
        <end position="3699"/>
    </location>
</feature>
<feature type="transmembrane region" description="Helical" evidence="2">
    <location>
        <begin position="3709"/>
        <end position="3729"/>
    </location>
</feature>
<feature type="transmembrane region" description="Helical" evidence="2">
    <location>
        <begin position="3752"/>
        <end position="3772"/>
    </location>
</feature>
<feature type="transmembrane region" description="Helical" evidence="2">
    <location>
        <begin position="4226"/>
        <end position="4246"/>
    </location>
</feature>
<feature type="transmembrane region" description="Helical" evidence="2">
    <location>
        <begin position="4458"/>
        <end position="4478"/>
    </location>
</feature>
<feature type="transmembrane region" description="Helical" evidence="2">
    <location>
        <begin position="4504"/>
        <end position="4524"/>
    </location>
</feature>
<feature type="transmembrane region" description="Helical" evidence="2">
    <location>
        <begin position="4536"/>
        <end position="4556"/>
    </location>
</feature>
<feature type="transmembrane region" description="Helical" evidence="2">
    <location>
        <begin position="4568"/>
        <end position="4588"/>
    </location>
</feature>
<feature type="transmembrane region" description="Helical" evidence="2">
    <location>
        <begin position="4607"/>
        <end position="4627"/>
    </location>
</feature>
<feature type="transmembrane region" description="Helical" evidence="2">
    <location>
        <begin position="4651"/>
        <end position="4671"/>
    </location>
</feature>
<feature type="domain" description="ABC transporter 1" evidence="3">
    <location>
        <begin position="3842"/>
        <end position="4074"/>
    </location>
</feature>
<feature type="domain" description="ABC transporter 2" evidence="3">
    <location>
        <begin position="4718"/>
        <end position="4956"/>
    </location>
</feature>
<feature type="binding site" evidence="3">
    <location>
        <begin position="3875"/>
        <end position="3882"/>
    </location>
    <ligand>
        <name>ATP</name>
        <dbReference type="ChEBI" id="CHEBI:30616"/>
        <label>1</label>
    </ligand>
</feature>
<feature type="binding site" evidence="3">
    <location>
        <begin position="4754"/>
        <end position="4761"/>
    </location>
    <ligand>
        <name>ATP</name>
        <dbReference type="ChEBI" id="CHEBI:30616"/>
        <label>2</label>
    </ligand>
</feature>
<feature type="splice variant" id="VSP_054633" description="In isoform 5, isoform 6 and isoform 7." evidence="9">
    <location>
        <begin position="1"/>
        <end position="2736"/>
    </location>
</feature>
<feature type="splice variant" id="VSP_021068" description="In isoform 3." evidence="11">
    <location>
        <begin position="1"/>
        <end position="2298"/>
    </location>
</feature>
<feature type="splice variant" id="VSP_021069" description="In isoform 2." evidence="8">
    <original>IPTDTSLEKMVCSVLSST</original>
    <variation>VHMLDCFSHRWAFPGDWI</variation>
    <location>
        <begin position="300"/>
        <end position="317"/>
    </location>
</feature>
<feature type="splice variant" id="VSP_021070" description="In isoform 2." evidence="8">
    <location>
        <begin position="318"/>
        <end position="5058"/>
    </location>
</feature>
<feature type="splice variant" id="VSP_054634" description="In isoform 4, isoform 5, isoform 6 and isoform 7." evidence="9 10">
    <original>F</original>
    <variation>FS</variation>
    <location>
        <position position="4271"/>
    </location>
</feature>
<feature type="splice variant" id="VSP_054635" description="In isoform 7." evidence="9">
    <location>
        <begin position="4478"/>
        <end position="4508"/>
    </location>
</feature>
<feature type="splice variant" id="VSP_054636" description="In isoform 6." evidence="9">
    <original>FGDGYTVKVWLCKEANQHCTVSDHLKLYFPGIQFKGQHLNLLEYHVPKRWGCLADLFKVIENNKTFLNIKHYSINQTTLEQVFINFASEQQQTLQSTLDPSTDSHHTHHLPI</original>
    <variation>KLNKTN</variation>
    <location>
        <begin position="4947"/>
        <end position="5058"/>
    </location>
</feature>
<feature type="sequence variant" id="VAR_059087" description="In dbSNP:rs1880738.">
    <original>P</original>
    <variation>L</variation>
    <location>
        <position position="506"/>
    </location>
</feature>
<feature type="sequence variant" id="VAR_059088" description="In dbSNP:rs2361519.">
    <original>R</original>
    <variation>H</variation>
    <location>
        <position position="555"/>
    </location>
</feature>
<feature type="sequence variant" id="VAR_059089" description="In dbSNP:rs17712293.">
    <original>I</original>
    <variation>S</variation>
    <location>
        <position position="767"/>
    </location>
</feature>
<feature type="sequence variant" id="VAR_059090" description="In dbSNP:rs17547816.">
    <original>E</original>
    <variation>K</variation>
    <location>
        <position position="799"/>
    </location>
</feature>
<feature type="sequence variant" id="VAR_059091" description="In dbSNP:rs17132195.">
    <original>I</original>
    <variation>V</variation>
    <location>
        <position position="1434"/>
    </location>
</feature>
<feature type="sequence variant" id="VAR_055470" description="In dbSNP:rs6583483.">
    <original>T</original>
    <variation>I</variation>
    <location>
        <position position="1508"/>
    </location>
</feature>
<feature type="sequence variant" id="VAR_059092" description="In dbSNP:rs17712299.">
    <original>F</original>
    <variation>L</variation>
    <location>
        <position position="1540"/>
    </location>
</feature>
<feature type="sequence variant" id="VAR_059093" description="In dbSNP:rs17132197.">
    <original>I</original>
    <variation>K</variation>
    <location>
        <position position="1889"/>
    </location>
</feature>
<feature type="sequence variant" id="VAR_059094" description="In dbSNP:rs17661364.">
    <original>N</original>
    <variation>D</variation>
    <location>
        <position position="2033"/>
    </location>
</feature>
<feature type="sequence variant" id="VAR_059095" description="In dbSNP:rs17092911.">
    <original>S</original>
    <variation>L</variation>
    <location>
        <position position="2154"/>
    </location>
</feature>
<feature type="sequence variant" id="VAR_059096" description="In dbSNP:rs1880736.">
    <original>A</original>
    <variation>E</variation>
    <location>
        <position position="2178"/>
    </location>
</feature>
<feature type="sequence variant" id="VAR_059097" description="In dbSNP:rs17132198.">
    <original>L</original>
    <variation>S</variation>
    <location>
        <position position="2212"/>
    </location>
</feature>
<feature type="sequence variant" id="VAR_059098" description="In dbSNP:rs17132206.">
    <original>K</original>
    <variation>R</variation>
    <location>
        <position position="2436"/>
    </location>
</feature>
<feature type="sequence variant" id="VAR_059099" description="In dbSNP:rs17132208.">
    <original>S</original>
    <variation>A</variation>
    <location>
        <position position="2537"/>
    </location>
</feature>
<feature type="sequence variant" id="VAR_059100" description="In dbSNP:rs2222648.">
    <original>R</original>
    <variation>W</variation>
    <location>
        <position position="2674"/>
    </location>
</feature>
<feature type="sequence variant" id="VAR_059101" description="In dbSNP:rs3931814.">
    <original>A</original>
    <variation>V</variation>
    <location>
        <position position="3142"/>
    </location>
</feature>
<feature type="sequence variant" id="VAR_059102" description="In dbSNP:rs17132289." evidence="7">
    <original>Y</original>
    <variation>F</variation>
    <location>
        <position position="3851"/>
    </location>
</feature>
<feature type="sequence variant" id="VAR_059103" description="In dbSNP:rs4917152.">
    <original>N</original>
    <variation>D</variation>
    <location>
        <position position="4277"/>
    </location>
</feature>
<feature type="sequence variant" id="VAR_059104" description="In dbSNP:rs4917153.">
    <original>Q</original>
    <variation>R</variation>
    <location>
        <position position="4302"/>
    </location>
</feature>
<feature type="sequence variant" id="VAR_059105" description="In dbSNP:rs17132370.">
    <original>P</original>
    <variation>A</variation>
    <location>
        <position position="4335"/>
    </location>
</feature>
<feature type="sequence conflict" description="In Ref. 1; AAP13576." evidence="11" ref="1">
    <original>H</original>
    <variation>R</variation>
    <location>
        <position position="1416"/>
    </location>
</feature>
<feature type="sequence conflict" description="In Ref. 1; AAP13576." evidence="11" ref="1">
    <original>P</original>
    <variation>L</variation>
    <location>
        <position position="2718"/>
    </location>
</feature>
<feature type="sequence conflict" description="In Ref. 1; AAP13576." evidence="11" ref="1">
    <original>L</original>
    <variation>R</variation>
    <location>
        <position position="2831"/>
    </location>
</feature>
<feature type="sequence conflict" description="In Ref. 1; AAP13576." evidence="11" ref="1">
    <original>K</original>
    <variation>E</variation>
    <location>
        <position position="2870"/>
    </location>
</feature>
<feature type="sequence conflict" description="In Ref. 5; AAO59914." evidence="11" ref="5">
    <original>T</original>
    <variation>A</variation>
    <location>
        <position position="3057"/>
    </location>
</feature>
<feature type="sequence conflict" description="In Ref. 2; AFH89038/AFH89039/AFH89041/AFH89042." evidence="11" ref="2">
    <original>E</original>
    <variation>K</variation>
    <location>
        <position position="4446"/>
    </location>
</feature>
<feature type="sequence conflict" description="In Ref. 1; AAP13576." evidence="11" ref="1">
    <original>L</original>
    <variation>P</variation>
    <location>
        <position position="4584"/>
    </location>
</feature>